<protein>
    <recommendedName>
        <fullName evidence="1">Small ribosomal subunit protein bS21</fullName>
    </recommendedName>
    <alternativeName>
        <fullName evidence="2">30S ribosomal protein S21</fullName>
    </alternativeName>
</protein>
<reference key="1">
    <citation type="journal article" date="2011" name="Stand. Genomic Sci.">
        <title>Complete genome sequence of Rhodospirillum rubrum type strain (S1).</title>
        <authorList>
            <person name="Munk A.C."/>
            <person name="Copeland A."/>
            <person name="Lucas S."/>
            <person name="Lapidus A."/>
            <person name="Del Rio T.G."/>
            <person name="Barry K."/>
            <person name="Detter J.C."/>
            <person name="Hammon N."/>
            <person name="Israni S."/>
            <person name="Pitluck S."/>
            <person name="Brettin T."/>
            <person name="Bruce D."/>
            <person name="Han C."/>
            <person name="Tapia R."/>
            <person name="Gilna P."/>
            <person name="Schmutz J."/>
            <person name="Larimer F."/>
            <person name="Land M."/>
            <person name="Kyrpides N.C."/>
            <person name="Mavromatis K."/>
            <person name="Richardson P."/>
            <person name="Rohde M."/>
            <person name="Goeker M."/>
            <person name="Klenk H.P."/>
            <person name="Zhang Y."/>
            <person name="Roberts G.P."/>
            <person name="Reslewic S."/>
            <person name="Schwartz D.C."/>
        </authorList>
    </citation>
    <scope>NUCLEOTIDE SEQUENCE [LARGE SCALE GENOMIC DNA]</scope>
    <source>
        <strain>ATCC 11170 / ATH 1.1.1 / DSM 467 / LMG 4362 / NCIMB 8255 / S1</strain>
    </source>
</reference>
<sequence>MGGGSQVEGERALVQVLVRDNNVDQALKALKKKMQREGVFREMKLRRNFEKPSEKRAREKAEAVRRARKLERKRLEREGF</sequence>
<comment type="similarity">
    <text evidence="1">Belongs to the bacterial ribosomal protein bS21 family.</text>
</comment>
<name>RS21_RHORT</name>
<proteinExistence type="inferred from homology"/>
<evidence type="ECO:0000255" key="1">
    <source>
        <dbReference type="HAMAP-Rule" id="MF_00358"/>
    </source>
</evidence>
<evidence type="ECO:0000305" key="2"/>
<gene>
    <name evidence="1" type="primary">rpsU</name>
    <name type="ordered locus">Rru_A1043</name>
</gene>
<dbReference type="EMBL" id="CP000230">
    <property type="protein sequence ID" value="ABC21844.1"/>
    <property type="molecule type" value="Genomic_DNA"/>
</dbReference>
<dbReference type="RefSeq" id="WP_011388798.1">
    <property type="nucleotide sequence ID" value="NC_007643.1"/>
</dbReference>
<dbReference type="RefSeq" id="YP_426131.1">
    <property type="nucleotide sequence ID" value="NC_007643.1"/>
</dbReference>
<dbReference type="SMR" id="Q2RVK1"/>
<dbReference type="STRING" id="269796.Rru_A1043"/>
<dbReference type="EnsemblBacteria" id="ABC21844">
    <property type="protein sequence ID" value="ABC21844"/>
    <property type="gene ID" value="Rru_A1043"/>
</dbReference>
<dbReference type="KEGG" id="rru:Rru_A1043"/>
<dbReference type="PATRIC" id="fig|269796.9.peg.1099"/>
<dbReference type="eggNOG" id="COG0828">
    <property type="taxonomic scope" value="Bacteria"/>
</dbReference>
<dbReference type="HOGENOM" id="CLU_159258_0_1_5"/>
<dbReference type="PhylomeDB" id="Q2RVK1"/>
<dbReference type="Proteomes" id="UP000001929">
    <property type="component" value="Chromosome"/>
</dbReference>
<dbReference type="GO" id="GO:1990904">
    <property type="term" value="C:ribonucleoprotein complex"/>
    <property type="evidence" value="ECO:0007669"/>
    <property type="project" value="UniProtKB-KW"/>
</dbReference>
<dbReference type="GO" id="GO:0005840">
    <property type="term" value="C:ribosome"/>
    <property type="evidence" value="ECO:0007669"/>
    <property type="project" value="UniProtKB-KW"/>
</dbReference>
<dbReference type="GO" id="GO:0003735">
    <property type="term" value="F:structural constituent of ribosome"/>
    <property type="evidence" value="ECO:0007669"/>
    <property type="project" value="InterPro"/>
</dbReference>
<dbReference type="GO" id="GO:0006412">
    <property type="term" value="P:translation"/>
    <property type="evidence" value="ECO:0007669"/>
    <property type="project" value="UniProtKB-UniRule"/>
</dbReference>
<dbReference type="Gene3D" id="1.20.5.1150">
    <property type="entry name" value="Ribosomal protein S8"/>
    <property type="match status" value="1"/>
</dbReference>
<dbReference type="HAMAP" id="MF_00358">
    <property type="entry name" value="Ribosomal_bS21"/>
    <property type="match status" value="1"/>
</dbReference>
<dbReference type="InterPro" id="IPR001911">
    <property type="entry name" value="Ribosomal_bS21"/>
</dbReference>
<dbReference type="InterPro" id="IPR018278">
    <property type="entry name" value="Ribosomal_bS21_CS"/>
</dbReference>
<dbReference type="InterPro" id="IPR038380">
    <property type="entry name" value="Ribosomal_bS21_sf"/>
</dbReference>
<dbReference type="NCBIfam" id="TIGR00030">
    <property type="entry name" value="S21p"/>
    <property type="match status" value="1"/>
</dbReference>
<dbReference type="PANTHER" id="PTHR21109">
    <property type="entry name" value="MITOCHONDRIAL 28S RIBOSOMAL PROTEIN S21"/>
    <property type="match status" value="1"/>
</dbReference>
<dbReference type="PANTHER" id="PTHR21109:SF0">
    <property type="entry name" value="SMALL RIBOSOMAL SUBUNIT PROTEIN BS21M"/>
    <property type="match status" value="1"/>
</dbReference>
<dbReference type="Pfam" id="PF01165">
    <property type="entry name" value="Ribosomal_S21"/>
    <property type="match status" value="1"/>
</dbReference>
<dbReference type="PROSITE" id="PS01181">
    <property type="entry name" value="RIBOSOMAL_S21"/>
    <property type="match status" value="1"/>
</dbReference>
<organism>
    <name type="scientific">Rhodospirillum rubrum (strain ATCC 11170 / ATH 1.1.1 / DSM 467 / LMG 4362 / NCIMB 8255 / S1)</name>
    <dbReference type="NCBI Taxonomy" id="269796"/>
    <lineage>
        <taxon>Bacteria</taxon>
        <taxon>Pseudomonadati</taxon>
        <taxon>Pseudomonadota</taxon>
        <taxon>Alphaproteobacteria</taxon>
        <taxon>Rhodospirillales</taxon>
        <taxon>Rhodospirillaceae</taxon>
        <taxon>Rhodospirillum</taxon>
    </lineage>
</organism>
<feature type="chain" id="PRO_0000266753" description="Small ribosomal subunit protein bS21">
    <location>
        <begin position="1"/>
        <end position="80"/>
    </location>
</feature>
<accession>Q2RVK1</accession>
<keyword id="KW-1185">Reference proteome</keyword>
<keyword id="KW-0687">Ribonucleoprotein</keyword>
<keyword id="KW-0689">Ribosomal protein</keyword>